<organism>
    <name type="scientific">Streptococcus mutans serotype c (strain ATCC 700610 / UA159)</name>
    <dbReference type="NCBI Taxonomy" id="210007"/>
    <lineage>
        <taxon>Bacteria</taxon>
        <taxon>Bacillati</taxon>
        <taxon>Bacillota</taxon>
        <taxon>Bacilli</taxon>
        <taxon>Lactobacillales</taxon>
        <taxon>Streptococcaceae</taxon>
        <taxon>Streptococcus</taxon>
    </lineage>
</organism>
<accession>P23504</accession>
<feature type="signal peptide" evidence="5">
    <location>
        <begin position="1"/>
        <end position="38"/>
    </location>
</feature>
<feature type="chain" id="PRO_0000005663" description="Cell surface antigen I">
    <location>
        <begin position="39"/>
        <end status="unknown"/>
    </location>
</feature>
<feature type="chain" id="PRO_0000005664" description="Cell surface antigen II" evidence="5">
    <location>
        <begin position="998"/>
        <end position="1532"/>
    </location>
</feature>
<feature type="propeptide" id="PRO_0000005665" description="Removed by sortase" evidence="2">
    <location>
        <begin position="1533"/>
        <end position="1562"/>
    </location>
</feature>
<feature type="repeat" description="Ag I/II A 1" evidence="3">
    <location>
        <begin position="147"/>
        <end position="221"/>
    </location>
</feature>
<feature type="repeat" description="Ag I/II A 2" evidence="3">
    <location>
        <begin position="222"/>
        <end position="303"/>
    </location>
</feature>
<feature type="repeat" description="Ag I/II A 3" evidence="3">
    <location>
        <begin position="304"/>
        <end position="385"/>
    </location>
</feature>
<feature type="repeat" description="Ag I/II A 4" evidence="3">
    <location>
        <begin position="386"/>
        <end position="467"/>
    </location>
</feature>
<feature type="region of interest" description="Disordered" evidence="4">
    <location>
        <begin position="42"/>
        <end position="91"/>
    </location>
</feature>
<feature type="region of interest" description="Helical" evidence="1">
    <location>
        <begin position="60"/>
        <end position="551"/>
    </location>
</feature>
<feature type="region of interest" description="Disordered" evidence="4">
    <location>
        <begin position="824"/>
        <end position="973"/>
    </location>
</feature>
<feature type="region of interest" description="Disordered" evidence="4">
    <location>
        <begin position="1482"/>
        <end position="1509"/>
    </location>
</feature>
<feature type="short sequence motif" description="LPXTG sorting signal" evidence="2">
    <location>
        <begin position="1529"/>
        <end position="1533"/>
    </location>
</feature>
<feature type="compositionally biased region" description="Low complexity" evidence="4">
    <location>
        <begin position="42"/>
        <end position="54"/>
    </location>
</feature>
<feature type="compositionally biased region" description="Polar residues" evidence="4">
    <location>
        <begin position="76"/>
        <end position="87"/>
    </location>
</feature>
<feature type="compositionally biased region" description="Pro residues" evidence="4">
    <location>
        <begin position="943"/>
        <end position="958"/>
    </location>
</feature>
<feature type="compositionally biased region" description="Low complexity" evidence="4">
    <location>
        <begin position="1500"/>
        <end position="1509"/>
    </location>
</feature>
<feature type="modified residue" description="Pentaglycyl murein peptidoglycan amidated threonine" evidence="2">
    <location>
        <position position="1532"/>
    </location>
</feature>
<feature type="mutagenesis site" description="Miniprotein is less helical." evidence="6">
    <original>YQADLAKYQKDLADY</original>
    <variation>FQADLAKFQKDLADF</variation>
    <location>
        <begin position="456"/>
        <end position="470"/>
    </location>
</feature>
<feature type="mutagenesis site" description="Miniprotein is no longer helical." evidence="6">
    <original>YQADLAKYQKDLADY</original>
    <variation>HQADLAKHQKDLADH</variation>
    <location>
        <begin position="456"/>
        <end position="470"/>
    </location>
</feature>
<feature type="mutagenesis site" description="Miniprotein is as helical as wild-type." evidence="6">
    <original>YQADLAKYQKDLADY</original>
    <variation>WQADLAKWQKDLADW</variation>
    <location>
        <begin position="456"/>
        <end position="470"/>
    </location>
</feature>
<feature type="sequence conflict" description="In Ref. 1; CAA35253." evidence="8" ref="1">
    <original>E</original>
    <variation>Q</variation>
    <location>
        <position position="73"/>
    </location>
</feature>
<feature type="sequence conflict" description="In Ref. 1; CAA35253." evidence="8" ref="1">
    <original>NQAGETNGSIPV</original>
    <variation>TKLERQMVHTI</variation>
    <location>
        <begin position="79"/>
        <end position="90"/>
    </location>
</feature>
<feature type="sequence conflict" description="In Ref. 1; CAA35253." evidence="8" ref="1">
    <original>E</original>
    <variation>G</variation>
    <location>
        <position position="179"/>
    </location>
</feature>
<feature type="sequence conflict" description="In Ref. 1; CAA35253." evidence="8" ref="1">
    <original>A</original>
    <variation>V</variation>
    <location>
        <position position="183"/>
    </location>
</feature>
<feature type="sequence conflict" description="In Ref. 1; CAA35253." evidence="8" ref="1">
    <original>A</original>
    <variation>S</variation>
    <location>
        <position position="227"/>
    </location>
</feature>
<feature type="sequence conflict" description="In Ref. 1; CAA35253." evidence="8" ref="1">
    <original>V</original>
    <variation>L</variation>
    <location>
        <position position="824"/>
    </location>
</feature>
<feature type="sequence conflict" description="In Ref. 1; CAA35253." evidence="8" ref="1">
    <original>N</original>
    <variation>K</variation>
    <location>
        <position position="878"/>
    </location>
</feature>
<feature type="sequence conflict" description="In Ref. 1; CAA35253." evidence="8" ref="1">
    <original>V</original>
    <variation>I</variation>
    <location>
        <position position="984"/>
    </location>
</feature>
<feature type="sequence conflict" description="In Ref. 1; CAA35253." evidence="8" ref="1">
    <original>I</original>
    <variation>V</variation>
    <location>
        <position position="1010"/>
    </location>
</feature>
<feature type="sequence conflict" description="In Ref. 1; CAA35253." evidence="8" ref="1">
    <original>T</original>
    <variation>A</variation>
    <location>
        <position position="1069"/>
    </location>
</feature>
<feature type="sequence conflict" description="In Ref. 1; CAA35253." evidence="8" ref="1">
    <original>T</original>
    <variation>S</variation>
    <location>
        <position position="1120"/>
    </location>
</feature>
<feature type="sequence conflict" description="In Ref. 1; CAA35253." evidence="8" ref="1">
    <original>K</original>
    <variation>Q</variation>
    <location>
        <position position="1201"/>
    </location>
</feature>
<feature type="sequence conflict" description="In Ref. 1; CAA35253." evidence="8" ref="1">
    <original>N</original>
    <variation>S</variation>
    <location>
        <position position="1241"/>
    </location>
</feature>
<feature type="sequence conflict" description="In Ref. 1; CAA35253." evidence="8" ref="1">
    <original>N</original>
    <variation>D</variation>
    <location>
        <position position="1307"/>
    </location>
</feature>
<feature type="sequence conflict" description="In Ref. 1; CAA35253." evidence="8" ref="1">
    <original>I</original>
    <variation>V</variation>
    <location>
        <position position="1323"/>
    </location>
</feature>
<feature type="sequence conflict" description="In Ref. 1; CAA35253." evidence="8" ref="1">
    <original>D</original>
    <variation>N</variation>
    <location>
        <position position="1371"/>
    </location>
</feature>
<feature type="sequence conflict" description="In Ref. 1; CAA35253." evidence="8" ref="1">
    <original>FKDGS</original>
    <variation>LKNGV</variation>
    <location>
        <begin position="1406"/>
        <end position="1410"/>
    </location>
</feature>
<feature type="sequence conflict" description="In Ref. 1; CAA35253." evidence="8" ref="1">
    <original>A</original>
    <variation>T</variation>
    <location>
        <position position="1416"/>
    </location>
</feature>
<feature type="sequence conflict" description="In Ref. 1; CAA35253." evidence="8" ref="1">
    <original>A</original>
    <variation>T</variation>
    <location>
        <position position="1429"/>
    </location>
</feature>
<feature type="sequence conflict" description="In Ref. 1; CAA35253." evidence="8" ref="1">
    <original>T</original>
    <variation>A</variation>
    <location>
        <position position="1494"/>
    </location>
</feature>
<feature type="sequence conflict" description="In Ref. 1; CAA35253." evidence="8" ref="1">
    <original>N</original>
    <variation>I</variation>
    <location>
        <position position="1512"/>
    </location>
</feature>
<feature type="sequence conflict" description="In Ref. 1; CAA35253." evidence="8" ref="1">
    <original>E</original>
    <variation>K</variation>
    <location>
        <position position="1527"/>
    </location>
</feature>
<feature type="helix" evidence="6 13">
    <location>
        <begin position="452"/>
        <end position="469"/>
    </location>
</feature>
<keyword id="KW-0002">3D-structure</keyword>
<keyword id="KW-0134">Cell wall</keyword>
<keyword id="KW-0214">Dental caries</keyword>
<keyword id="KW-0903">Direct protein sequencing</keyword>
<keyword id="KW-0572">Peptidoglycan-anchor</keyword>
<keyword id="KW-1185">Reference proteome</keyword>
<keyword id="KW-0677">Repeat</keyword>
<keyword id="KW-0964">Secreted</keyword>
<keyword id="KW-0732">Signal</keyword>
<gene>
    <name evidence="7" type="primary">spaP</name>
    <name type="ordered locus">SMU_610</name>
</gene>
<dbReference type="EMBL" id="X17390">
    <property type="protein sequence ID" value="CAA35253.1"/>
    <property type="molecule type" value="Genomic_DNA"/>
</dbReference>
<dbReference type="EMBL" id="AE014133">
    <property type="protein sequence ID" value="AAN58348.1"/>
    <property type="molecule type" value="Genomic_DNA"/>
</dbReference>
<dbReference type="PIR" id="S06839">
    <property type="entry name" value="S06839"/>
</dbReference>
<dbReference type="RefSeq" id="NP_721042.1">
    <property type="nucleotide sequence ID" value="NC_004350.2"/>
</dbReference>
<dbReference type="RefSeq" id="WP_002352221.1">
    <property type="nucleotide sequence ID" value="NC_004350.2"/>
</dbReference>
<dbReference type="PDB" id="5LO2">
    <property type="method" value="NMR"/>
    <property type="chains" value="A=452-470"/>
</dbReference>
<dbReference type="PDB" id="5LO3">
    <property type="method" value="NMR"/>
    <property type="chains" value="A=452-470"/>
</dbReference>
<dbReference type="PDB" id="5LO4">
    <property type="method" value="NMR"/>
    <property type="chains" value="A=452-470"/>
</dbReference>
<dbReference type="PDBsum" id="5LO2"/>
<dbReference type="PDBsum" id="5LO3"/>
<dbReference type="PDBsum" id="5LO4"/>
<dbReference type="BMRB" id="P23504"/>
<dbReference type="SMR" id="P23504"/>
<dbReference type="STRING" id="210007.SMU_610"/>
<dbReference type="KEGG" id="smu:SMU_610"/>
<dbReference type="PATRIC" id="fig|210007.7.peg.542"/>
<dbReference type="eggNOG" id="COG3064">
    <property type="taxonomic scope" value="Bacteria"/>
</dbReference>
<dbReference type="eggNOG" id="COG3087">
    <property type="taxonomic scope" value="Bacteria"/>
</dbReference>
<dbReference type="HOGENOM" id="CLU_257994_0_0_9"/>
<dbReference type="OrthoDB" id="2143924at2"/>
<dbReference type="Proteomes" id="UP000002512">
    <property type="component" value="Chromosome"/>
</dbReference>
<dbReference type="GO" id="GO:0005576">
    <property type="term" value="C:extracellular region"/>
    <property type="evidence" value="ECO:0007669"/>
    <property type="project" value="UniProtKB-KW"/>
</dbReference>
<dbReference type="GO" id="GO:0043328">
    <property type="term" value="P:protein transport to vacuole involved in ubiquitin-dependent protein catabolic process via the multivesicular body sorting pathway"/>
    <property type="evidence" value="ECO:0007669"/>
    <property type="project" value="TreeGrafter"/>
</dbReference>
<dbReference type="FunFam" id="2.60.40.740:FF:000001">
    <property type="entry name" value="Major cell-surface adhesin PAc"/>
    <property type="match status" value="1"/>
</dbReference>
<dbReference type="Gene3D" id="2.60.40.740">
    <property type="match status" value="3"/>
</dbReference>
<dbReference type="Gene3D" id="6.10.250.2200">
    <property type="match status" value="4"/>
</dbReference>
<dbReference type="Gene3D" id="2.60.530.10">
    <property type="entry name" value="Major cell-surface adhesin PAc"/>
    <property type="match status" value="1"/>
</dbReference>
<dbReference type="InterPro" id="IPR026345">
    <property type="entry name" value="Adh_isopep-form_adh_dom"/>
</dbReference>
<dbReference type="InterPro" id="IPR041324">
    <property type="entry name" value="AgI/II_N"/>
</dbReference>
<dbReference type="InterPro" id="IPR032300">
    <property type="entry name" value="Antigen_C"/>
</dbReference>
<dbReference type="InterPro" id="IPR021197">
    <property type="entry name" value="Cross-wall-target_lipo_motif"/>
</dbReference>
<dbReference type="InterPro" id="IPR013574">
    <property type="entry name" value="Glucan-bd_C/Surface_Ag-I/II_V"/>
</dbReference>
<dbReference type="InterPro" id="IPR019931">
    <property type="entry name" value="LPXTG_anchor"/>
</dbReference>
<dbReference type="InterPro" id="IPR036234">
    <property type="entry name" value="SA_I/II_PAC_V_sf"/>
</dbReference>
<dbReference type="InterPro" id="IPR009578">
    <property type="entry name" value="Surface_Ag_I_II_A_rpt"/>
</dbReference>
<dbReference type="NCBIfam" id="TIGR04228">
    <property type="entry name" value="isopep_sspB_C2"/>
    <property type="match status" value="1"/>
</dbReference>
<dbReference type="NCBIfam" id="TIGR01167">
    <property type="entry name" value="LPXTG_anchor"/>
    <property type="match status" value="1"/>
</dbReference>
<dbReference type="NCBIfam" id="NF033804">
    <property type="entry name" value="Streccoc_I_II"/>
    <property type="match status" value="1"/>
</dbReference>
<dbReference type="NCBIfam" id="TIGR03726">
    <property type="entry name" value="strep_RK_lipo"/>
    <property type="match status" value="1"/>
</dbReference>
<dbReference type="PANTHER" id="PTHR23030">
    <property type="entry name" value="PCD6 INTERACTING PROTEIN-RELATED"/>
    <property type="match status" value="1"/>
</dbReference>
<dbReference type="PANTHER" id="PTHR23030:SF30">
    <property type="entry name" value="TYROSINE-PROTEIN PHOSPHATASE NON-RECEPTOR TYPE 23"/>
    <property type="match status" value="1"/>
</dbReference>
<dbReference type="Pfam" id="PF18652">
    <property type="entry name" value="Adhesin_P1_N"/>
    <property type="match status" value="1"/>
</dbReference>
<dbReference type="Pfam" id="PF17998">
    <property type="entry name" value="AgI_II_C2"/>
    <property type="match status" value="1"/>
</dbReference>
<dbReference type="Pfam" id="PF16364">
    <property type="entry name" value="Antigen_C"/>
    <property type="match status" value="1"/>
</dbReference>
<dbReference type="Pfam" id="PF08363">
    <property type="entry name" value="GbpC"/>
    <property type="match status" value="1"/>
</dbReference>
<dbReference type="Pfam" id="PF00746">
    <property type="entry name" value="Gram_pos_anchor"/>
    <property type="match status" value="1"/>
</dbReference>
<dbReference type="Pfam" id="PF06696">
    <property type="entry name" value="Strep_SA_rep"/>
    <property type="match status" value="7"/>
</dbReference>
<dbReference type="PRINTS" id="PR01217">
    <property type="entry name" value="PRICHEXTENSN"/>
</dbReference>
<dbReference type="SUPFAM" id="SSF74914">
    <property type="entry name" value="V-region of surface antigen I/II (SA I/II, PAC)"/>
    <property type="match status" value="1"/>
</dbReference>
<dbReference type="PROSITE" id="PS51965">
    <property type="entry name" value="AG_I_II_AR"/>
    <property type="match status" value="4"/>
</dbReference>
<dbReference type="PROSITE" id="PS50847">
    <property type="entry name" value="GRAM_POS_ANCHORING"/>
    <property type="match status" value="1"/>
</dbReference>
<name>SPAP_STRMU</name>
<reference key="1">
    <citation type="journal article" date="1989" name="FEBS Lett.">
        <title>Sequence analysis of the cloned streptococcal cell surface antigen I/II.</title>
        <authorList>
            <person name="Kelly C.G."/>
            <person name="Evans P."/>
            <person name="Bergmeier L.A."/>
            <person name="Lee S.F."/>
            <person name="Progulske-Fox A."/>
            <person name="Harris A.C."/>
            <person name="Aitken A."/>
            <person name="Bleiweis A.S."/>
            <person name="Lehner T."/>
        </authorList>
    </citation>
    <scope>NUCLEOTIDE SEQUENCE [GENOMIC DNA]</scope>
    <scope>PROTEIN SEQUENCE OF 39-45 AND 998-1008</scope>
    <scope>PROBABLE SUBCELLULAR LOCATION</scope>
    <source>
        <strain>NG5 / Serotype c</strain>
    </source>
</reference>
<reference key="2">
    <citation type="journal article" date="1990" name="Arch. Oral Biol.">
        <title>Sequencing and characterization of the 185 kDa cell surface antigen of Streptococcus mutans.</title>
        <authorList>
            <person name="Kelly C.G."/>
            <person name="Evans P."/>
            <person name="Ma J.K.C."/>
            <person name="Bergmeier L.A."/>
            <person name="Taylor W."/>
            <person name="Brady L.J."/>
            <person name="Lee S.F."/>
            <person name="Bleiweis A.S."/>
            <person name="Lehner T."/>
        </authorList>
    </citation>
    <scope>NUCLEOTIDE SEQUENCE [GENOMIC DNA]</scope>
    <source>
        <strain>NG5 / Serotype c</strain>
    </source>
</reference>
<reference key="3">
    <citation type="journal article" date="2002" name="Proc. Natl. Acad. Sci. U.S.A.">
        <title>Genome sequence of Streptococcus mutans UA159, a cariogenic dental pathogen.</title>
        <authorList>
            <person name="Ajdic D.J."/>
            <person name="McShan W.M."/>
            <person name="McLaughlin R.E."/>
            <person name="Savic G."/>
            <person name="Chang J."/>
            <person name="Carson M.B."/>
            <person name="Primeaux C."/>
            <person name="Tian R."/>
            <person name="Kenton S."/>
            <person name="Jia H.G."/>
            <person name="Lin S.P."/>
            <person name="Qian Y."/>
            <person name="Li S."/>
            <person name="Zhu H."/>
            <person name="Najar F.Z."/>
            <person name="Lai H."/>
            <person name="White J."/>
            <person name="Roe B.A."/>
            <person name="Ferretti J.J."/>
        </authorList>
    </citation>
    <scope>NUCLEOTIDE SEQUENCE [LARGE SCALE GENOMIC DNA]</scope>
    <source>
        <strain>ATCC 700610 / UA159</strain>
    </source>
</reference>
<reference key="4">
    <citation type="journal article" date="1991" name="Infect. Immun.">
        <title>Conservation of the gene encoding streptococcal antigen I/II in oral streptococci.</title>
        <authorList>
            <person name="Ma J.K.C."/>
            <person name="Kelly C.G."/>
            <person name="Munro G."/>
            <person name="Whiley R.A."/>
            <person name="Lehner T."/>
        </authorList>
    </citation>
    <scope>NUCLEOTIDE SEQUENCE [GENOMIC DNA] OF 1084-1189</scope>
</reference>
<reference evidence="10 11 12" key="5">
    <citation type="journal article" date="2017" name="Nat. Chem. Biol.">
        <title>Engineering protein stability with atomic precision in a monomeric miniprotein.</title>
        <authorList>
            <person name="Baker E.G."/>
            <person name="Williams C."/>
            <person name="Hudson K.L."/>
            <person name="Bartlett G.J."/>
            <person name="Heal J.W."/>
            <person name="Porter Goff K.L."/>
            <person name="Sessions R.B."/>
            <person name="Crump M.P."/>
            <person name="Woolfson D.N."/>
        </authorList>
    </citation>
    <scope>STRUCTURE BY NMR OF 452-470</scope>
    <scope>DOMAIN</scope>
    <scope>MUTAGENESIS OF 456-TYR--TYR-470 AND TYR-470</scope>
</reference>
<comment type="function">
    <text>Surface protein antigen implicated in dental caries.</text>
</comment>
<comment type="subcellular location">
    <subcellularLocation>
        <location evidence="2 9">Secreted</location>
        <location evidence="2 9">Cell wall</location>
        <topology evidence="2">Peptidoglycan-anchor</topology>
    </subcellularLocation>
</comment>
<comment type="domain">
    <text evidence="6">A short internal peptide (residues 452-470) has been used as a miniprotein to examine protein folding and stability.</text>
</comment>
<comment type="PTM">
    <text evidence="5">Detected as a 185 kDa cell surface protein, but also as 2 proteins in S.mutans culture supernatants of about 150 kDa (antigen I) and 50 kDa (antigen II); antigen II is only seen after proteolysis. Antigen I and II have the same N-terminus but different C-termini.</text>
</comment>
<comment type="similarity">
    <text evidence="8">Belongs to the antigen I/II family.</text>
</comment>
<evidence type="ECO:0000255" key="1"/>
<evidence type="ECO:0000255" key="2">
    <source>
        <dbReference type="PROSITE-ProRule" id="PRU00477"/>
    </source>
</evidence>
<evidence type="ECO:0000255" key="3">
    <source>
        <dbReference type="PROSITE-ProRule" id="PRU01310"/>
    </source>
</evidence>
<evidence type="ECO:0000256" key="4">
    <source>
        <dbReference type="SAM" id="MobiDB-lite"/>
    </source>
</evidence>
<evidence type="ECO:0000269" key="5">
    <source>
    </source>
</evidence>
<evidence type="ECO:0000269" key="6">
    <source>
    </source>
</evidence>
<evidence type="ECO:0000303" key="7">
    <source>
    </source>
</evidence>
<evidence type="ECO:0000305" key="8"/>
<evidence type="ECO:0000305" key="9">
    <source>
    </source>
</evidence>
<evidence type="ECO:0007744" key="10">
    <source>
        <dbReference type="PDB" id="5LO2"/>
    </source>
</evidence>
<evidence type="ECO:0007744" key="11">
    <source>
        <dbReference type="PDB" id="5LO3"/>
    </source>
</evidence>
<evidence type="ECO:0007744" key="12">
    <source>
        <dbReference type="PDB" id="5LO4"/>
    </source>
</evidence>
<evidence type="ECO:0007829" key="13">
    <source>
        <dbReference type="PDB" id="5LO3"/>
    </source>
</evidence>
<proteinExistence type="evidence at protein level"/>
<sequence length="1562" mass="169972">MKVKKTYGFRKSKISKTLCGAVLGTVAAVSVAGQKVFADETTTTSDVDTKVVGTQTGNPATNLPEAQGSASKEAEQSQNQAGETNGSIPVEVPKTDLDQAAKDAKSAGVNVVQDADVNKGTVKTAEEAVQKETEIKEDYTKQAEDIKKTTDQYKSDVAAHEAEVAKIKAKNQATKEQYEKDMAAHKAEVERINAANAASKTAYEAKLAQYQADLAAVQKTNAANQAAYQKALAAYQAELKRVQEANAAAKAAYDTAVAANNAKNTEIAAANEEIRKRNATAKAEYETKLAQYQAELKRVQEANAANEADYQAKLTAYQTELARVQKANADAKAAYEAAVAANNAKNAALTAENTAIKQRNENAKATYEAALKQYEADLAAVKKANAANEADYQAKLTAYQTELARVQKANADAKAAYEAAVAANNAANAALTAENTAIKKRNADAKADYEAKLAKYQADLAKYQKDLADYPVKLKAYEDEQASIKAALAELEKHKNEDGNLTEPSAQNLVYDLEPNANLSLTTDGKFLKASAVDDAFSKSTSKAKYDQKILQLDDLDITNLEQSNDVASSMELYGNFGDKAGWSTTVSNNSQVKWGSVLLERGQSATATYTNLQNSYYNGKKISKIVYKYTVDPKSKFQGQKVWLGIFTDPTLGVFASAYTGQVEKNTSIFIKNEFTFYDEDGKPINFDNALLSVASLNRENNSIEMAKDYTGKFVKISGSSIGEKNGMIYATDTLNFRQGQGGARWTMYTRASEPGSGWDSSDAPNSWYGAGAIRMSGPNNSVTLGAISSTLVVPADPTMAIETGKKPNIWYSLNGKIRAVNVPKVTKEKPTPPVKPTAPTKPTYETEKPLKPAPVAPNYEKEPTPPTRTPDQAEPNKPTPPTYETEKPLEPAPVEPSYEAEPTPPTRTPDQAEPNKPTPPTYETEKPLEPAPVEPSYEAEPTPPTPTPDQPEPNKPVEPTYEVIPTPPTDPVYQDLPTPPSVPTVHFHYFKLAVQPQVNKEIRNNNDINIDRTLVAKQSVVKFQLKTADLPAGRDETTSFVLVDPLPSGYQFNPEATKAASPGFDVTYDNATNTVTFKATAATLATFNADLTKSVATIYPTVVGQVLNDGATYKNNFTLTVNDAYGIKSNVVRVTTPGKPNDPDNPNNNYIKPTKVNKNENGVVIDGKTVLAGSTNYYELTWDLDQYKNDRSSADTIQKGFYYVDDYPEEALELRQDLVKITDANGNEVTGVSVDNYTNLEAAPQEIRDVLSKAGIRPKGAFQIFRADNPREFYDTYVKTGIDLKIVSPMVVKKQMGQTGGSYENQAYQIDFGNGYASNIIINNVPKINPKKDVTLTLDPADTNNVDGQTIPLNTVFNYRLIGGIIPADHSEELFEYNFYDDYDQTGDHYTGQYKVFAKVDITFKDGSIIKSGAELTQYTTAEVDTAKGAITIKFKEAFLRSVSIDSAFQAESYIQMKRIAVGTFENTYINTVNGVTYSSNTVKTTTPEDPTDPTDPQDPSSPRTSTVINYKPQSTAYQPSSVQETLPNTGVTNNAYMPLLGIIGLVTSFSLLGLKAKKD</sequence>
<protein>
    <recommendedName>
        <fullName>Cell surface antigen I/II</fullName>
    </recommendedName>
    <component>
        <recommendedName>
            <fullName>Cell surface antigen I</fullName>
        </recommendedName>
    </component>
    <component>
        <recommendedName>
            <fullName>Cell surface antigen II</fullName>
        </recommendedName>
    </component>
</protein>